<keyword id="KW-0002">3D-structure</keyword>
<keyword id="KW-0007">Acetylation</keyword>
<keyword id="KW-0067">ATP-binding</keyword>
<keyword id="KW-0963">Cytoplasm</keyword>
<keyword id="KW-0903">Direct protein sequencing</keyword>
<keyword id="KW-0378">Hydrolase</keyword>
<keyword id="KW-0460">Magnesium</keyword>
<keyword id="KW-0479">Metal-binding</keyword>
<keyword id="KW-0547">Nucleotide-binding</keyword>
<keyword id="KW-0597">Phosphoprotein</keyword>
<keyword id="KW-0653">Protein transport</keyword>
<keyword id="KW-0677">Repeat</keyword>
<keyword id="KW-0813">Transport</keyword>
<gene>
    <name type="primary">NSF</name>
</gene>
<name>NSF_CRIGR</name>
<organism>
    <name type="scientific">Cricetulus griseus</name>
    <name type="common">Chinese hamster</name>
    <name type="synonym">Cricetulus barabensis griseus</name>
    <dbReference type="NCBI Taxonomy" id="10029"/>
    <lineage>
        <taxon>Eukaryota</taxon>
        <taxon>Metazoa</taxon>
        <taxon>Chordata</taxon>
        <taxon>Craniata</taxon>
        <taxon>Vertebrata</taxon>
        <taxon>Euteleostomi</taxon>
        <taxon>Mammalia</taxon>
        <taxon>Eutheria</taxon>
        <taxon>Euarchontoglires</taxon>
        <taxon>Glires</taxon>
        <taxon>Rodentia</taxon>
        <taxon>Myomorpha</taxon>
        <taxon>Muroidea</taxon>
        <taxon>Cricetidae</taxon>
        <taxon>Cricetinae</taxon>
        <taxon>Cricetulus</taxon>
    </lineage>
</organism>
<sequence>MAGRSMQAARCPTDELSLSNCAVVSEKDYQSGQHVIVRTSPNHKYIFTLRTHPSVVPGSVAFSLPQRKWAGLSIGQEIEVALYSFDKAKQCIGTMTIEIDFLQKKNIDSNPYDTDKMAAEFIQQFNNQAFSVGQQLVFSFNDKLFGLLVKDIEAMDPSILKGEPASGKRQKIEVGLVVGNSQVAFEKAENSSLNLIGKAKTKENRQSIINPDWNFEKMGIGGLDKEFSDIFRRAFASRVFPPEIVEQMGCKHVKGILLYGPPGCGKTLLARQIGKMLNAREPKVVNGPEILNKYVGESEANIRKLFADAEEEQRRLGANSGLHIIIFDEIDAICKQRGSMAGSTGVHDTVVNQLLSKIDGVEQLNNILVIGMTNRPDLIDEALLRPGRLEVKMEIGLPDEKGRLQILHIHTARMRGHQLLSADVDIKELAVETKNFSGAELEGLVRAAQSTAMNRHIKASTKVEVDMEKAESLQVTRGDFLASLENDIKPAFGTNQEDYASYIMNGIIKWGDPVTRVLDDGELLVQQTKNSDRTPLVSVLLEGPPHSGKTALAAKIAEESNFPFIKICSPDKMIGFSETAKCQAMKKIFDDAYKSQLSCVVVDDIERLLDYVPIGPRFSNLVLQALLVLLKKAPPQGRKLLIIGTTSRKDVLQEMEMLNAFSTTIHVPNIATGEQLLEALELLGNFKDKERTTIAQQVKGKKVWIGIKKLLMLIEMSLQMDPEYRVRKFLALLREEGASPLDFD</sequence>
<protein>
    <recommendedName>
        <fullName>Vesicle-fusing ATPase</fullName>
        <ecNumber>3.6.4.6</ecNumber>
    </recommendedName>
    <alternativeName>
        <fullName>N-ethylmaleimide-sensitive fusion protein</fullName>
        <shortName>NEM-sensitive fusion protein</shortName>
    </alternativeName>
    <alternativeName>
        <fullName>Vesicular-fusion protein NSF</fullName>
    </alternativeName>
</protein>
<evidence type="ECO:0000250" key="1"/>
<evidence type="ECO:0000250" key="2">
    <source>
        <dbReference type="UniProtKB" id="P46459"/>
    </source>
</evidence>
<evidence type="ECO:0000250" key="3">
    <source>
        <dbReference type="UniProtKB" id="P46460"/>
    </source>
</evidence>
<evidence type="ECO:0000269" key="4">
    <source>
    </source>
</evidence>
<evidence type="ECO:0000269" key="5">
    <source>
    </source>
</evidence>
<evidence type="ECO:0000305" key="6"/>
<evidence type="ECO:0000305" key="7">
    <source>
    </source>
</evidence>
<evidence type="ECO:0000305" key="8">
    <source>
    </source>
</evidence>
<evidence type="ECO:0007829" key="9">
    <source>
        <dbReference type="PDB" id="1D2N"/>
    </source>
</evidence>
<evidence type="ECO:0007829" key="10">
    <source>
        <dbReference type="PDB" id="1QCS"/>
    </source>
</evidence>
<reference key="1">
    <citation type="journal article" date="1989" name="Nature">
        <title>A fusion protein required for vesicle-mediated transport in both mammalian cells and yeast.</title>
        <authorList>
            <person name="Wilson D.W."/>
            <person name="Wilcox C.A."/>
            <person name="Flynn G.C."/>
            <person name="Chen E."/>
            <person name="Kuang W.-J."/>
            <person name="Henzel W.J."/>
            <person name="Block M.R."/>
            <person name="Ullrich A."/>
            <person name="Rothman J.E."/>
        </authorList>
    </citation>
    <scope>NUCLEOTIDE SEQUENCE [MRNA]</scope>
    <scope>PARTIAL PROTEIN SEQUENCE</scope>
    <source>
        <tissue>Ovary</tissue>
    </source>
</reference>
<reference key="2">
    <citation type="journal article" date="1989" name="Nature">
        <title>Vesicular transport between the endoplasmic reticulum and the Golgi stack requires the NEM-sensitive fusion protein.</title>
        <authorList>
            <person name="Beckers C.J.M."/>
            <person name="Block M.R."/>
            <person name="Glick B.S."/>
            <person name="Rothman J.E."/>
            <person name="Balch W.E."/>
        </authorList>
    </citation>
    <scope>FUNCTION</scope>
</reference>
<reference key="3">
    <citation type="journal article" date="1998" name="Cell">
        <title>Crystal structure of the hexamerization domain of N-ethylmaleimide-sensitive fusion protein.</title>
        <authorList>
            <person name="Lenzen C.U."/>
            <person name="Steinmann D."/>
            <person name="Whiteheart S.W."/>
            <person name="Weis W.I."/>
        </authorList>
    </citation>
    <scope>X-RAY CRYSTALLOGRAPHY (1.75 ANGSTROMS) OF 487-740 IN COMPLEX WITH ATP ANALOG</scope>
</reference>
<reference key="4">
    <citation type="journal article" date="1998" name="Cell">
        <authorList>
            <person name="Lenzen C.U."/>
            <person name="Steinmann D."/>
            <person name="Whiteheart S.W."/>
            <person name="Weis W.I."/>
        </authorList>
    </citation>
    <scope>ERRATUM OF PUBMED:9727495</scope>
</reference>
<reference key="5">
    <citation type="journal article" date="1998" name="Nat. Struct. Biol.">
        <title>Structure of the ATP-dependent oligomerization domain of N-ethylmaleimide sensitive factor complexed with ATP.</title>
        <authorList>
            <person name="Yu R.C."/>
            <person name="Hanson P.I."/>
            <person name="Jahn R."/>
            <person name="Bruenger A.T."/>
        </authorList>
    </citation>
    <scope>X-RAY CRYSTALLOGRAPHY (1.90 ANGSTROMS) OF 478-744 IN COMPLEX WITH ATP AND MAGNESIUM</scope>
</reference>
<reference key="6">
    <citation type="journal article" date="1999" name="Mol. Cell">
        <title>NSF N-terminal domain crystal structure: models of NSF function.</title>
        <authorList>
            <person name="Yu R.C."/>
            <person name="Jahn R."/>
            <person name="Brunger A.T."/>
        </authorList>
    </citation>
    <scope>X-RAY CRYSTALLOGRAPHY (1.9 ANGSTROMS) OF 1-205</scope>
</reference>
<reference key="7">
    <citation type="journal article" date="1999" name="Nat. Cell Biol.">
        <title>Crystal structure of the amino-terminal domain of N-ethylmaleimide-sensitive fusion protein.</title>
        <authorList>
            <person name="May A.P."/>
            <person name="Misura K.M."/>
            <person name="Whiteheart S.W."/>
            <person name="Weis W.I."/>
        </authorList>
    </citation>
    <scope>X-RAY CRYSTALLOGRAPHY (2.3 ANGSTROMS) OF 1-203</scope>
</reference>
<accession>P18708</accession>
<feature type="chain" id="PRO_0000084562" description="Vesicle-fusing ATPase">
    <location>
        <begin position="1"/>
        <end position="744"/>
    </location>
</feature>
<feature type="binding site" evidence="5 7">
    <location>
        <begin position="505"/>
        <end position="510"/>
    </location>
    <ligand>
        <name>ATP</name>
        <dbReference type="ChEBI" id="CHEBI:30616"/>
    </ligand>
</feature>
<feature type="binding site" evidence="5 7">
    <location>
        <begin position="545"/>
        <end position="552"/>
    </location>
    <ligand>
        <name>ATP</name>
        <dbReference type="ChEBI" id="CHEBI:30616"/>
    </ligand>
</feature>
<feature type="binding site" evidence="5">
    <location>
        <position position="550"/>
    </location>
    <ligand>
        <name>Mg(2+)</name>
        <dbReference type="ChEBI" id="CHEBI:18420"/>
    </ligand>
</feature>
<feature type="modified residue" description="N6-acetyllysine" evidence="3">
    <location>
        <position position="105"/>
    </location>
</feature>
<feature type="modified residue" description="Phosphoserine" evidence="2">
    <location>
        <position position="207"/>
    </location>
</feature>
<feature type="modified residue" description="Phosphotyrosine" evidence="3">
    <location>
        <position position="259"/>
    </location>
</feature>
<feature type="modified residue" description="Phosphoserine; by CDK16" evidence="3">
    <location>
        <position position="569"/>
    </location>
</feature>
<feature type="strand" evidence="10">
    <location>
        <begin position="4"/>
        <end position="10"/>
    </location>
</feature>
<feature type="helix" evidence="10">
    <location>
        <begin position="14"/>
        <end position="18"/>
    </location>
</feature>
<feature type="strand" evidence="10">
    <location>
        <begin position="22"/>
        <end position="24"/>
    </location>
</feature>
<feature type="turn" evidence="10">
    <location>
        <begin position="26"/>
        <end position="28"/>
    </location>
</feature>
<feature type="strand" evidence="10">
    <location>
        <begin position="34"/>
        <end position="40"/>
    </location>
</feature>
<feature type="strand" evidence="10">
    <location>
        <begin position="43"/>
        <end position="51"/>
    </location>
</feature>
<feature type="strand" evidence="10">
    <location>
        <begin position="59"/>
        <end position="62"/>
    </location>
</feature>
<feature type="helix" evidence="10">
    <location>
        <begin position="64"/>
        <end position="70"/>
    </location>
</feature>
<feature type="strand" evidence="10">
    <location>
        <begin position="77"/>
        <end position="83"/>
    </location>
</feature>
<feature type="helix" evidence="10">
    <location>
        <begin position="87"/>
        <end position="90"/>
    </location>
</feature>
<feature type="strand" evidence="10">
    <location>
        <begin position="91"/>
        <end position="102"/>
    </location>
</feature>
<feature type="helix" evidence="10">
    <location>
        <begin position="104"/>
        <end position="106"/>
    </location>
</feature>
<feature type="strand" evidence="10">
    <location>
        <begin position="111"/>
        <end position="113"/>
    </location>
</feature>
<feature type="helix" evidence="10">
    <location>
        <begin position="114"/>
        <end position="125"/>
    </location>
</feature>
<feature type="strand" evidence="10">
    <location>
        <begin position="129"/>
        <end position="131"/>
    </location>
</feature>
<feature type="strand" evidence="10">
    <location>
        <begin position="135"/>
        <end position="140"/>
    </location>
</feature>
<feature type="strand" evidence="10">
    <location>
        <begin position="143"/>
        <end position="154"/>
    </location>
</feature>
<feature type="strand" evidence="10">
    <location>
        <begin position="173"/>
        <end position="176"/>
    </location>
</feature>
<feature type="strand" evidence="10">
    <location>
        <begin position="182"/>
        <end position="187"/>
    </location>
</feature>
<feature type="strand" evidence="10">
    <location>
        <begin position="194"/>
        <end position="200"/>
    </location>
</feature>
<feature type="turn" evidence="9">
    <location>
        <begin position="500"/>
        <end position="502"/>
    </location>
</feature>
<feature type="helix" evidence="9">
    <location>
        <begin position="512"/>
        <end position="530"/>
    </location>
</feature>
<feature type="strand" evidence="9">
    <location>
        <begin position="535"/>
        <end position="542"/>
    </location>
</feature>
<feature type="helix" evidence="9">
    <location>
        <begin position="549"/>
        <end position="560"/>
    </location>
</feature>
<feature type="strand" evidence="9">
    <location>
        <begin position="563"/>
        <end position="568"/>
    </location>
</feature>
<feature type="helix" evidence="9">
    <location>
        <begin position="570"/>
        <end position="572"/>
    </location>
</feature>
<feature type="helix" evidence="9">
    <location>
        <begin position="578"/>
        <end position="593"/>
    </location>
</feature>
<feature type="strand" evidence="9">
    <location>
        <begin position="595"/>
        <end position="602"/>
    </location>
</feature>
<feature type="helix" evidence="9">
    <location>
        <begin position="605"/>
        <end position="608"/>
    </location>
</feature>
<feature type="turn" evidence="9">
    <location>
        <begin position="613"/>
        <end position="616"/>
    </location>
</feature>
<feature type="helix" evidence="9">
    <location>
        <begin position="620"/>
        <end position="629"/>
    </location>
</feature>
<feature type="strand" evidence="9">
    <location>
        <begin position="639"/>
        <end position="647"/>
    </location>
</feature>
<feature type="helix" evidence="9">
    <location>
        <begin position="649"/>
        <end position="654"/>
    </location>
</feature>
<feature type="turn" evidence="9">
    <location>
        <begin position="658"/>
        <end position="660"/>
    </location>
</feature>
<feature type="strand" evidence="9">
    <location>
        <begin position="661"/>
        <end position="666"/>
    </location>
</feature>
<feature type="strand" evidence="9">
    <location>
        <begin position="670"/>
        <end position="672"/>
    </location>
</feature>
<feature type="helix" evidence="9">
    <location>
        <begin position="673"/>
        <end position="683"/>
    </location>
</feature>
<feature type="helix" evidence="9">
    <location>
        <begin position="688"/>
        <end position="698"/>
    </location>
</feature>
<feature type="strand" evidence="9">
    <location>
        <begin position="701"/>
        <end position="705"/>
    </location>
</feature>
<feature type="helix" evidence="9">
    <location>
        <begin position="707"/>
        <end position="717"/>
    </location>
</feature>
<feature type="helix" evidence="9">
    <location>
        <begin position="722"/>
        <end position="724"/>
    </location>
</feature>
<feature type="helix" evidence="9">
    <location>
        <begin position="725"/>
        <end position="735"/>
    </location>
</feature>
<dbReference type="EC" id="3.6.4.6"/>
<dbReference type="EMBL" id="X15652">
    <property type="protein sequence ID" value="CAA33678.1"/>
    <property type="status" value="ALT_INIT"/>
    <property type="molecule type" value="mRNA"/>
</dbReference>
<dbReference type="PIR" id="S04235">
    <property type="entry name" value="S04235"/>
</dbReference>
<dbReference type="RefSeq" id="XP_007606206.1">
    <property type="nucleotide sequence ID" value="XM_007608016.1"/>
</dbReference>
<dbReference type="PDB" id="1D2N">
    <property type="method" value="X-ray"/>
    <property type="resolution" value="1.75 A"/>
    <property type="chains" value="A=487-740"/>
</dbReference>
<dbReference type="PDB" id="1NSF">
    <property type="method" value="X-ray"/>
    <property type="resolution" value="1.90 A"/>
    <property type="chains" value="A=478-744"/>
</dbReference>
<dbReference type="PDB" id="1QCS">
    <property type="method" value="X-ray"/>
    <property type="resolution" value="1.90 A"/>
    <property type="chains" value="A=1-205"/>
</dbReference>
<dbReference type="PDB" id="1QDN">
    <property type="method" value="X-ray"/>
    <property type="resolution" value="2.30 A"/>
    <property type="chains" value="A/B/C=1-203"/>
</dbReference>
<dbReference type="PDB" id="3J94">
    <property type="method" value="EM"/>
    <property type="resolution" value="4.20 A"/>
    <property type="chains" value="A/B/C/D/E/F=1-744"/>
</dbReference>
<dbReference type="PDB" id="3J95">
    <property type="method" value="EM"/>
    <property type="resolution" value="7.60 A"/>
    <property type="chains" value="A/B/C/D/E/F=1-744"/>
</dbReference>
<dbReference type="PDB" id="3J96">
    <property type="method" value="EM"/>
    <property type="resolution" value="7.60 A"/>
    <property type="chains" value="A/B/C/D/E/F=1-744"/>
</dbReference>
<dbReference type="PDB" id="3J97">
    <property type="method" value="EM"/>
    <property type="resolution" value="7.80 A"/>
    <property type="chains" value="A/B/C/D/E/F=1-744"/>
</dbReference>
<dbReference type="PDB" id="3J98">
    <property type="method" value="EM"/>
    <property type="resolution" value="8.40 A"/>
    <property type="chains" value="A/B/C/D/E/F=1-744"/>
</dbReference>
<dbReference type="PDB" id="3J99">
    <property type="method" value="EM"/>
    <property type="resolution" value="8.20 A"/>
    <property type="chains" value="A/B/C/D/E/F=1-744"/>
</dbReference>
<dbReference type="PDB" id="6IP2">
    <property type="method" value="EM"/>
    <property type="resolution" value="3.70 A"/>
    <property type="chains" value="A/B/C/D/E/F=1-744"/>
</dbReference>
<dbReference type="PDB" id="6MDM">
    <property type="method" value="EM"/>
    <property type="resolution" value="4.40 A"/>
    <property type="chains" value="A/B/C/D/E/F=1-744"/>
</dbReference>
<dbReference type="PDB" id="6MDN">
    <property type="method" value="EM"/>
    <property type="resolution" value="4.40 A"/>
    <property type="chains" value="A/B/C/D/E/F=1-723"/>
</dbReference>
<dbReference type="PDB" id="6MDO">
    <property type="method" value="EM"/>
    <property type="resolution" value="3.90 A"/>
    <property type="chains" value="A/B/C/D/E/F=1-723"/>
</dbReference>
<dbReference type="PDB" id="6MDP">
    <property type="method" value="EM"/>
    <property type="resolution" value="3.80 A"/>
    <property type="chains" value="A/B/C/D/E/F=1-723"/>
</dbReference>
<dbReference type="PDBsum" id="1D2N"/>
<dbReference type="PDBsum" id="1NSF"/>
<dbReference type="PDBsum" id="1QCS"/>
<dbReference type="PDBsum" id="1QDN"/>
<dbReference type="PDBsum" id="3J94"/>
<dbReference type="PDBsum" id="3J95"/>
<dbReference type="PDBsum" id="3J96"/>
<dbReference type="PDBsum" id="3J97"/>
<dbReference type="PDBsum" id="3J98"/>
<dbReference type="PDBsum" id="3J99"/>
<dbReference type="PDBsum" id="6IP2"/>
<dbReference type="PDBsum" id="6MDM"/>
<dbReference type="PDBsum" id="6MDN"/>
<dbReference type="PDBsum" id="6MDO"/>
<dbReference type="PDBsum" id="6MDP"/>
<dbReference type="EMDB" id="EMD-6204"/>
<dbReference type="EMDB" id="EMD-6205"/>
<dbReference type="EMDB" id="EMD-6206"/>
<dbReference type="EMDB" id="EMD-6207"/>
<dbReference type="EMDB" id="EMD-6208"/>
<dbReference type="EMDB" id="EMD-6209"/>
<dbReference type="EMDB" id="EMD-6210"/>
<dbReference type="EMDB" id="EMD-9100"/>
<dbReference type="EMDB" id="EMD-9101"/>
<dbReference type="EMDB" id="EMD-9102"/>
<dbReference type="EMDB" id="EMD-9103"/>
<dbReference type="EMDB" id="EMD-9698"/>
<dbReference type="SMR" id="P18708"/>
<dbReference type="DIP" id="DIP-35598N"/>
<dbReference type="IntAct" id="P18708">
    <property type="interactions" value="9"/>
</dbReference>
<dbReference type="BindingDB" id="P18708"/>
<dbReference type="ChEMBL" id="CHEMBL4739845"/>
<dbReference type="iPTMnet" id="P18708"/>
<dbReference type="PaxDb" id="10029-XP_007606206.1"/>
<dbReference type="Ensembl" id="ENSCGRT00001028633.1">
    <property type="protein sequence ID" value="ENSCGRP00001024387.1"/>
    <property type="gene ID" value="ENSCGRG00001022331.1"/>
</dbReference>
<dbReference type="GeneID" id="100770898"/>
<dbReference type="CTD" id="4905"/>
<dbReference type="eggNOG" id="KOG0741">
    <property type="taxonomic scope" value="Eukaryota"/>
</dbReference>
<dbReference type="GeneTree" id="ENSGT00530000064085"/>
<dbReference type="OrthoDB" id="9982946at2759"/>
<dbReference type="EvolutionaryTrace" id="P18708"/>
<dbReference type="Proteomes" id="UP000694386">
    <property type="component" value="Unplaced"/>
</dbReference>
<dbReference type="Proteomes" id="UP001108280">
    <property type="component" value="Unplaced"/>
</dbReference>
<dbReference type="GO" id="GO:0005829">
    <property type="term" value="C:cytosol"/>
    <property type="evidence" value="ECO:0007669"/>
    <property type="project" value="Ensembl"/>
</dbReference>
<dbReference type="GO" id="GO:0005795">
    <property type="term" value="C:Golgi stack"/>
    <property type="evidence" value="ECO:0007669"/>
    <property type="project" value="TreeGrafter"/>
</dbReference>
<dbReference type="GO" id="GO:0030496">
    <property type="term" value="C:midbody"/>
    <property type="evidence" value="ECO:0000314"/>
    <property type="project" value="UniProtKB"/>
</dbReference>
<dbReference type="GO" id="GO:0005886">
    <property type="term" value="C:plasma membrane"/>
    <property type="evidence" value="ECO:0007669"/>
    <property type="project" value="Ensembl"/>
</dbReference>
<dbReference type="GO" id="GO:0005524">
    <property type="term" value="F:ATP binding"/>
    <property type="evidence" value="ECO:0007669"/>
    <property type="project" value="UniProtKB-KW"/>
</dbReference>
<dbReference type="GO" id="GO:0016887">
    <property type="term" value="F:ATP hydrolysis activity"/>
    <property type="evidence" value="ECO:0007669"/>
    <property type="project" value="Ensembl"/>
</dbReference>
<dbReference type="GO" id="GO:0140545">
    <property type="term" value="F:ATP-dependent protein disaggregase activity"/>
    <property type="evidence" value="ECO:0000314"/>
    <property type="project" value="ParkinsonsUK-UCL"/>
</dbReference>
<dbReference type="GO" id="GO:0042802">
    <property type="term" value="F:identical protein binding"/>
    <property type="evidence" value="ECO:0000353"/>
    <property type="project" value="IntAct"/>
</dbReference>
<dbReference type="GO" id="GO:0035255">
    <property type="term" value="F:ionotropic glutamate receptor binding"/>
    <property type="evidence" value="ECO:0007669"/>
    <property type="project" value="Ensembl"/>
</dbReference>
<dbReference type="GO" id="GO:0046872">
    <property type="term" value="F:metal ion binding"/>
    <property type="evidence" value="ECO:0007669"/>
    <property type="project" value="UniProtKB-KW"/>
</dbReference>
<dbReference type="GO" id="GO:0030165">
    <property type="term" value="F:PDZ domain binding"/>
    <property type="evidence" value="ECO:0007669"/>
    <property type="project" value="Ensembl"/>
</dbReference>
<dbReference type="GO" id="GO:0019901">
    <property type="term" value="F:protein kinase binding"/>
    <property type="evidence" value="ECO:0007669"/>
    <property type="project" value="Ensembl"/>
</dbReference>
<dbReference type="GO" id="GO:0044877">
    <property type="term" value="F:protein-containing complex binding"/>
    <property type="evidence" value="ECO:0000314"/>
    <property type="project" value="ParkinsonsUK-UCL"/>
</dbReference>
<dbReference type="GO" id="GO:0000149">
    <property type="term" value="F:SNARE binding"/>
    <property type="evidence" value="ECO:0000314"/>
    <property type="project" value="ParkinsonsUK-UCL"/>
</dbReference>
<dbReference type="GO" id="GO:0017075">
    <property type="term" value="F:syntaxin-1 binding"/>
    <property type="evidence" value="ECO:0007669"/>
    <property type="project" value="Ensembl"/>
</dbReference>
<dbReference type="GO" id="GO:0043001">
    <property type="term" value="P:Golgi to plasma membrane protein transport"/>
    <property type="evidence" value="ECO:0007669"/>
    <property type="project" value="TreeGrafter"/>
</dbReference>
<dbReference type="GO" id="GO:0006891">
    <property type="term" value="P:intra-Golgi vesicle-mediated transport"/>
    <property type="evidence" value="ECO:0007669"/>
    <property type="project" value="TreeGrafter"/>
</dbReference>
<dbReference type="GO" id="GO:0006886">
    <property type="term" value="P:intracellular protein transport"/>
    <property type="evidence" value="ECO:0007669"/>
    <property type="project" value="Ensembl"/>
</dbReference>
<dbReference type="GO" id="GO:0045732">
    <property type="term" value="P:positive regulation of protein catabolic process"/>
    <property type="evidence" value="ECO:0007669"/>
    <property type="project" value="Ensembl"/>
</dbReference>
<dbReference type="GO" id="GO:0001921">
    <property type="term" value="P:positive regulation of receptor recycling"/>
    <property type="evidence" value="ECO:0007669"/>
    <property type="project" value="Ensembl"/>
</dbReference>
<dbReference type="GO" id="GO:0006813">
    <property type="term" value="P:potassium ion transport"/>
    <property type="evidence" value="ECO:0007669"/>
    <property type="project" value="Ensembl"/>
</dbReference>
<dbReference type="GO" id="GO:0035494">
    <property type="term" value="P:SNARE complex disassembly"/>
    <property type="evidence" value="ECO:0000314"/>
    <property type="project" value="ParkinsonsUK-UCL"/>
</dbReference>
<dbReference type="CDD" id="cd19504">
    <property type="entry name" value="RecA-like_NSF-SEC18_r1-like"/>
    <property type="match status" value="1"/>
</dbReference>
<dbReference type="FunFam" id="1.10.8.60:FF:000026">
    <property type="entry name" value="vesicle-fusing ATPase isoform X1"/>
    <property type="match status" value="1"/>
</dbReference>
<dbReference type="FunFam" id="1.10.8.60:FF:000031">
    <property type="entry name" value="vesicle-fusing ATPase isoform X1"/>
    <property type="match status" value="1"/>
</dbReference>
<dbReference type="FunFam" id="2.40.40.20:FF:000006">
    <property type="entry name" value="vesicle-fusing ATPase isoform X1"/>
    <property type="match status" value="1"/>
</dbReference>
<dbReference type="FunFam" id="3.10.330.10:FF:000003">
    <property type="entry name" value="vesicle-fusing ATPase isoform X1"/>
    <property type="match status" value="1"/>
</dbReference>
<dbReference type="FunFam" id="3.40.50.300:FF:000166">
    <property type="entry name" value="vesicle-fusing ATPase isoform X1"/>
    <property type="match status" value="1"/>
</dbReference>
<dbReference type="FunFam" id="3.40.50.300:FF:000187">
    <property type="entry name" value="Vesicular-fusion ATPase SEC18"/>
    <property type="match status" value="1"/>
</dbReference>
<dbReference type="Gene3D" id="1.10.8.60">
    <property type="match status" value="2"/>
</dbReference>
<dbReference type="Gene3D" id="2.40.40.20">
    <property type="match status" value="1"/>
</dbReference>
<dbReference type="Gene3D" id="3.10.330.10">
    <property type="match status" value="1"/>
</dbReference>
<dbReference type="Gene3D" id="3.40.50.300">
    <property type="entry name" value="P-loop containing nucleotide triphosphate hydrolases"/>
    <property type="match status" value="2"/>
</dbReference>
<dbReference type="InterPro" id="IPR003593">
    <property type="entry name" value="AAA+_ATPase"/>
</dbReference>
<dbReference type="InterPro" id="IPR041569">
    <property type="entry name" value="AAA_lid_3"/>
</dbReference>
<dbReference type="InterPro" id="IPR009010">
    <property type="entry name" value="Asp_de-COase-like_dom_sf"/>
</dbReference>
<dbReference type="InterPro" id="IPR003959">
    <property type="entry name" value="ATPase_AAA_core"/>
</dbReference>
<dbReference type="InterPro" id="IPR003960">
    <property type="entry name" value="ATPase_AAA_CS"/>
</dbReference>
<dbReference type="InterPro" id="IPR004201">
    <property type="entry name" value="Cdc48_dom2"/>
</dbReference>
<dbReference type="InterPro" id="IPR029067">
    <property type="entry name" value="CDC48_domain_2-like_sf"/>
</dbReference>
<dbReference type="InterPro" id="IPR003338">
    <property type="entry name" value="CDC4_N-term_subdom"/>
</dbReference>
<dbReference type="InterPro" id="IPR054419">
    <property type="entry name" value="NSF_ATPase_lid"/>
</dbReference>
<dbReference type="InterPro" id="IPR027417">
    <property type="entry name" value="P-loop_NTPase"/>
</dbReference>
<dbReference type="InterPro" id="IPR039812">
    <property type="entry name" value="Vesicle-fus_ATPase"/>
</dbReference>
<dbReference type="PANTHER" id="PTHR23078:SF3">
    <property type="entry name" value="VESICLE-FUSING ATPASE"/>
    <property type="match status" value="1"/>
</dbReference>
<dbReference type="PANTHER" id="PTHR23078">
    <property type="entry name" value="VESICULAR-FUSION PROTEIN NSF"/>
    <property type="match status" value="1"/>
</dbReference>
<dbReference type="Pfam" id="PF00004">
    <property type="entry name" value="AAA"/>
    <property type="match status" value="2"/>
</dbReference>
<dbReference type="Pfam" id="PF17862">
    <property type="entry name" value="AAA_lid_3"/>
    <property type="match status" value="1"/>
</dbReference>
<dbReference type="Pfam" id="PF02933">
    <property type="entry name" value="CDC48_2"/>
    <property type="match status" value="1"/>
</dbReference>
<dbReference type="Pfam" id="PF02359">
    <property type="entry name" value="CDC48_N"/>
    <property type="match status" value="1"/>
</dbReference>
<dbReference type="Pfam" id="PF21964">
    <property type="entry name" value="NSF_ATPase_lid"/>
    <property type="match status" value="1"/>
</dbReference>
<dbReference type="PRINTS" id="PR00830">
    <property type="entry name" value="ENDOLAPTASE"/>
</dbReference>
<dbReference type="SMART" id="SM00382">
    <property type="entry name" value="AAA"/>
    <property type="match status" value="2"/>
</dbReference>
<dbReference type="SMART" id="SM01072">
    <property type="entry name" value="CDC48_2"/>
    <property type="match status" value="1"/>
</dbReference>
<dbReference type="SMART" id="SM01073">
    <property type="entry name" value="CDC48_N"/>
    <property type="match status" value="1"/>
</dbReference>
<dbReference type="SUPFAM" id="SSF50692">
    <property type="entry name" value="ADC-like"/>
    <property type="match status" value="1"/>
</dbReference>
<dbReference type="SUPFAM" id="SSF54585">
    <property type="entry name" value="Cdc48 domain 2-like"/>
    <property type="match status" value="1"/>
</dbReference>
<dbReference type="SUPFAM" id="SSF52540">
    <property type="entry name" value="P-loop containing nucleoside triphosphate hydrolases"/>
    <property type="match status" value="2"/>
</dbReference>
<dbReference type="PROSITE" id="PS00674">
    <property type="entry name" value="AAA"/>
    <property type="match status" value="1"/>
</dbReference>
<proteinExistence type="evidence at protein level"/>
<comment type="function">
    <text evidence="4">Required for vesicle-mediated transport. Catalyzes the fusion of transport vesicles within the Golgi cisternae. Is also required for transport from the endoplasmic reticulum to the Golgi stack. Seems to function as a fusion protein required for the delivery of cargo proteins to all compartments of the Golgi stack independent of vesicle origin. Interaction with AMPAR subunit GRIA2 leads to influence GRIA2 membrane cycling.</text>
</comment>
<comment type="catalytic activity">
    <reaction>
        <text>ATP + H2O = ADP + phosphate + H(+)</text>
        <dbReference type="Rhea" id="RHEA:13065"/>
        <dbReference type="ChEBI" id="CHEBI:15377"/>
        <dbReference type="ChEBI" id="CHEBI:15378"/>
        <dbReference type="ChEBI" id="CHEBI:30616"/>
        <dbReference type="ChEBI" id="CHEBI:43474"/>
        <dbReference type="ChEBI" id="CHEBI:456216"/>
        <dbReference type="EC" id="3.6.4.6"/>
    </reaction>
</comment>
<comment type="cofactor">
    <cofactor evidence="8">
        <name>Mg(2+)</name>
        <dbReference type="ChEBI" id="CHEBI:18420"/>
    </cofactor>
    <text evidence="8">Binds 1 Mg(2+) ion per subunit.</text>
</comment>
<comment type="subunit">
    <text evidence="1">Homohexamer. Interacts with GABARAP and GABARAPL2 (By similarity). Interacts with GRIA2 (By similarity). Interacts with PLK2, leading to disrupt the interaction with GRIA2 (By similarity). Interacts with MUSK; may regulate MUSK endocytosis and activity (By similarity). Interacts with CDK16 (By similarity).</text>
</comment>
<comment type="interaction">
    <interactant intactId="EBI-925742">
        <id>P18708</id>
    </interactant>
    <interactant intactId="EBI-925742">
        <id>P18708</id>
        <label>NSF</label>
    </interactant>
    <organismsDiffer>false</organismsDiffer>
    <experiments>5</experiments>
</comment>
<comment type="subcellular location">
    <subcellularLocation>
        <location>Cytoplasm</location>
    </subcellularLocation>
</comment>
<comment type="PTM">
    <text evidence="1">Phosphorylation at Ser-569 interferes with homohexamerization.</text>
</comment>
<comment type="similarity">
    <text evidence="6">Belongs to the AAA ATPase family.</text>
</comment>
<comment type="sequence caution" evidence="6">
    <conflict type="erroneous initiation">
        <sequence resource="EMBL-CDS" id="CAA33678"/>
    </conflict>
</comment>